<keyword id="KW-0240">DNA-directed RNA polymerase</keyword>
<keyword id="KW-0460">Magnesium</keyword>
<keyword id="KW-0479">Metal-binding</keyword>
<keyword id="KW-0548">Nucleotidyltransferase</keyword>
<keyword id="KW-1185">Reference proteome</keyword>
<keyword id="KW-0804">Transcription</keyword>
<keyword id="KW-0808">Transferase</keyword>
<keyword id="KW-0862">Zinc</keyword>
<feature type="chain" id="PRO_0000308839" description="DNA-directed RNA polymerase subunit beta'">
    <location>
        <begin position="1"/>
        <end position="1215"/>
    </location>
</feature>
<feature type="binding site" evidence="1">
    <location>
        <position position="60"/>
    </location>
    <ligand>
        <name>Zn(2+)</name>
        <dbReference type="ChEBI" id="CHEBI:29105"/>
        <label>1</label>
    </ligand>
</feature>
<feature type="binding site" evidence="1">
    <location>
        <position position="62"/>
    </location>
    <ligand>
        <name>Zn(2+)</name>
        <dbReference type="ChEBI" id="CHEBI:29105"/>
        <label>1</label>
    </ligand>
</feature>
<feature type="binding site" evidence="1">
    <location>
        <position position="75"/>
    </location>
    <ligand>
        <name>Zn(2+)</name>
        <dbReference type="ChEBI" id="CHEBI:29105"/>
        <label>1</label>
    </ligand>
</feature>
<feature type="binding site" evidence="1">
    <location>
        <position position="78"/>
    </location>
    <ligand>
        <name>Zn(2+)</name>
        <dbReference type="ChEBI" id="CHEBI:29105"/>
        <label>1</label>
    </ligand>
</feature>
<feature type="binding site" evidence="1">
    <location>
        <position position="450"/>
    </location>
    <ligand>
        <name>Mg(2+)</name>
        <dbReference type="ChEBI" id="CHEBI:18420"/>
    </ligand>
</feature>
<feature type="binding site" evidence="1">
    <location>
        <position position="452"/>
    </location>
    <ligand>
        <name>Mg(2+)</name>
        <dbReference type="ChEBI" id="CHEBI:18420"/>
    </ligand>
</feature>
<feature type="binding site" evidence="1">
    <location>
        <position position="454"/>
    </location>
    <ligand>
        <name>Mg(2+)</name>
        <dbReference type="ChEBI" id="CHEBI:18420"/>
    </ligand>
</feature>
<feature type="binding site" evidence="1">
    <location>
        <position position="819"/>
    </location>
    <ligand>
        <name>Zn(2+)</name>
        <dbReference type="ChEBI" id="CHEBI:29105"/>
        <label>2</label>
    </ligand>
</feature>
<feature type="binding site" evidence="1">
    <location>
        <position position="893"/>
    </location>
    <ligand>
        <name>Zn(2+)</name>
        <dbReference type="ChEBI" id="CHEBI:29105"/>
        <label>2</label>
    </ligand>
</feature>
<feature type="binding site" evidence="1">
    <location>
        <position position="900"/>
    </location>
    <ligand>
        <name>Zn(2+)</name>
        <dbReference type="ChEBI" id="CHEBI:29105"/>
        <label>2</label>
    </ligand>
</feature>
<feature type="binding site" evidence="1">
    <location>
        <position position="903"/>
    </location>
    <ligand>
        <name>Zn(2+)</name>
        <dbReference type="ChEBI" id="CHEBI:29105"/>
        <label>2</label>
    </ligand>
</feature>
<proteinExistence type="inferred from homology"/>
<reference key="1">
    <citation type="journal article" date="2006" name="Proc. Natl. Acad. Sci. U.S.A.">
        <title>Comparative genomics of the lactic acid bacteria.</title>
        <authorList>
            <person name="Makarova K.S."/>
            <person name="Slesarev A."/>
            <person name="Wolf Y.I."/>
            <person name="Sorokin A."/>
            <person name="Mirkin B."/>
            <person name="Koonin E.V."/>
            <person name="Pavlov A."/>
            <person name="Pavlova N."/>
            <person name="Karamychev V."/>
            <person name="Polouchine N."/>
            <person name="Shakhova V."/>
            <person name="Grigoriev I."/>
            <person name="Lou Y."/>
            <person name="Rohksar D."/>
            <person name="Lucas S."/>
            <person name="Huang K."/>
            <person name="Goodstein D.M."/>
            <person name="Hawkins T."/>
            <person name="Plengvidhya V."/>
            <person name="Welker D."/>
            <person name="Hughes J."/>
            <person name="Goh Y."/>
            <person name="Benson A."/>
            <person name="Baldwin K."/>
            <person name="Lee J.-H."/>
            <person name="Diaz-Muniz I."/>
            <person name="Dosti B."/>
            <person name="Smeianov V."/>
            <person name="Wechter W."/>
            <person name="Barabote R."/>
            <person name="Lorca G."/>
            <person name="Altermann E."/>
            <person name="Barrangou R."/>
            <person name="Ganesan B."/>
            <person name="Xie Y."/>
            <person name="Rawsthorne H."/>
            <person name="Tamir D."/>
            <person name="Parker C."/>
            <person name="Breidt F."/>
            <person name="Broadbent J.R."/>
            <person name="Hutkins R."/>
            <person name="O'Sullivan D."/>
            <person name="Steele J."/>
            <person name="Unlu G."/>
            <person name="Saier M.H. Jr."/>
            <person name="Klaenhammer T."/>
            <person name="Richardson P."/>
            <person name="Kozyavkin S."/>
            <person name="Weimer B.C."/>
            <person name="Mills D.A."/>
        </authorList>
    </citation>
    <scope>NUCLEOTIDE SEQUENCE [LARGE SCALE GENOMIC DNA]</scope>
    <source>
        <strain>ATCC 367 / BCRC 12310 / CIP 105137 / JCM 1170 / LMG 11437 / NCIMB 947 / NCTC 947</strain>
    </source>
</reference>
<name>RPOC_LEVBA</name>
<dbReference type="EC" id="2.7.7.6" evidence="1"/>
<dbReference type="EMBL" id="CP000416">
    <property type="protein sequence ID" value="ABJ64772.1"/>
    <property type="molecule type" value="Genomic_DNA"/>
</dbReference>
<dbReference type="RefSeq" id="WP_011668506.1">
    <property type="nucleotide sequence ID" value="NC_008497.1"/>
</dbReference>
<dbReference type="SMR" id="Q03PV0"/>
<dbReference type="STRING" id="387344.LVIS_1697"/>
<dbReference type="GeneID" id="56993558"/>
<dbReference type="KEGG" id="lbr:LVIS_1697"/>
<dbReference type="eggNOG" id="COG0086">
    <property type="taxonomic scope" value="Bacteria"/>
</dbReference>
<dbReference type="HOGENOM" id="CLU_000524_3_1_9"/>
<dbReference type="Proteomes" id="UP000001652">
    <property type="component" value="Chromosome"/>
</dbReference>
<dbReference type="GO" id="GO:0000428">
    <property type="term" value="C:DNA-directed RNA polymerase complex"/>
    <property type="evidence" value="ECO:0007669"/>
    <property type="project" value="UniProtKB-KW"/>
</dbReference>
<dbReference type="GO" id="GO:0003677">
    <property type="term" value="F:DNA binding"/>
    <property type="evidence" value="ECO:0007669"/>
    <property type="project" value="UniProtKB-UniRule"/>
</dbReference>
<dbReference type="GO" id="GO:0003899">
    <property type="term" value="F:DNA-directed RNA polymerase activity"/>
    <property type="evidence" value="ECO:0007669"/>
    <property type="project" value="UniProtKB-UniRule"/>
</dbReference>
<dbReference type="GO" id="GO:0000287">
    <property type="term" value="F:magnesium ion binding"/>
    <property type="evidence" value="ECO:0007669"/>
    <property type="project" value="UniProtKB-UniRule"/>
</dbReference>
<dbReference type="GO" id="GO:0008270">
    <property type="term" value="F:zinc ion binding"/>
    <property type="evidence" value="ECO:0007669"/>
    <property type="project" value="UniProtKB-UniRule"/>
</dbReference>
<dbReference type="GO" id="GO:0006351">
    <property type="term" value="P:DNA-templated transcription"/>
    <property type="evidence" value="ECO:0007669"/>
    <property type="project" value="UniProtKB-UniRule"/>
</dbReference>
<dbReference type="CDD" id="cd02655">
    <property type="entry name" value="RNAP_beta'_C"/>
    <property type="match status" value="1"/>
</dbReference>
<dbReference type="CDD" id="cd01609">
    <property type="entry name" value="RNAP_beta'_N"/>
    <property type="match status" value="1"/>
</dbReference>
<dbReference type="FunFam" id="4.10.860.120:FF:000001">
    <property type="entry name" value="DNA-directed RNA polymerase subunit beta"/>
    <property type="match status" value="1"/>
</dbReference>
<dbReference type="Gene3D" id="1.10.132.30">
    <property type="match status" value="1"/>
</dbReference>
<dbReference type="Gene3D" id="1.10.150.390">
    <property type="match status" value="1"/>
</dbReference>
<dbReference type="Gene3D" id="1.10.1790.20">
    <property type="match status" value="1"/>
</dbReference>
<dbReference type="Gene3D" id="1.10.40.90">
    <property type="match status" value="1"/>
</dbReference>
<dbReference type="Gene3D" id="2.40.40.20">
    <property type="match status" value="1"/>
</dbReference>
<dbReference type="Gene3D" id="2.40.50.100">
    <property type="match status" value="1"/>
</dbReference>
<dbReference type="Gene3D" id="4.10.860.120">
    <property type="entry name" value="RNA polymerase II, clamp domain"/>
    <property type="match status" value="1"/>
</dbReference>
<dbReference type="Gene3D" id="1.10.274.100">
    <property type="entry name" value="RNA polymerase Rpb1, domain 3"/>
    <property type="match status" value="1"/>
</dbReference>
<dbReference type="HAMAP" id="MF_01322">
    <property type="entry name" value="RNApol_bact_RpoC"/>
    <property type="match status" value="1"/>
</dbReference>
<dbReference type="InterPro" id="IPR045867">
    <property type="entry name" value="DNA-dir_RpoC_beta_prime"/>
</dbReference>
<dbReference type="InterPro" id="IPR012754">
    <property type="entry name" value="DNA-dir_RpoC_beta_prime_bact"/>
</dbReference>
<dbReference type="InterPro" id="IPR000722">
    <property type="entry name" value="RNA_pol_asu"/>
</dbReference>
<dbReference type="InterPro" id="IPR006592">
    <property type="entry name" value="RNA_pol_N"/>
</dbReference>
<dbReference type="InterPro" id="IPR007080">
    <property type="entry name" value="RNA_pol_Rpb1_1"/>
</dbReference>
<dbReference type="InterPro" id="IPR007066">
    <property type="entry name" value="RNA_pol_Rpb1_3"/>
</dbReference>
<dbReference type="InterPro" id="IPR042102">
    <property type="entry name" value="RNA_pol_Rpb1_3_sf"/>
</dbReference>
<dbReference type="InterPro" id="IPR007083">
    <property type="entry name" value="RNA_pol_Rpb1_4"/>
</dbReference>
<dbReference type="InterPro" id="IPR007081">
    <property type="entry name" value="RNA_pol_Rpb1_5"/>
</dbReference>
<dbReference type="InterPro" id="IPR044893">
    <property type="entry name" value="RNA_pol_Rpb1_clamp_domain"/>
</dbReference>
<dbReference type="InterPro" id="IPR038120">
    <property type="entry name" value="Rpb1_funnel_sf"/>
</dbReference>
<dbReference type="NCBIfam" id="TIGR02386">
    <property type="entry name" value="rpoC_TIGR"/>
    <property type="match status" value="1"/>
</dbReference>
<dbReference type="PANTHER" id="PTHR19376">
    <property type="entry name" value="DNA-DIRECTED RNA POLYMERASE"/>
    <property type="match status" value="1"/>
</dbReference>
<dbReference type="PANTHER" id="PTHR19376:SF54">
    <property type="entry name" value="DNA-DIRECTED RNA POLYMERASE SUBUNIT BETA"/>
    <property type="match status" value="1"/>
</dbReference>
<dbReference type="Pfam" id="PF04997">
    <property type="entry name" value="RNA_pol_Rpb1_1"/>
    <property type="match status" value="1"/>
</dbReference>
<dbReference type="Pfam" id="PF00623">
    <property type="entry name" value="RNA_pol_Rpb1_2"/>
    <property type="match status" value="2"/>
</dbReference>
<dbReference type="Pfam" id="PF04983">
    <property type="entry name" value="RNA_pol_Rpb1_3"/>
    <property type="match status" value="1"/>
</dbReference>
<dbReference type="Pfam" id="PF05000">
    <property type="entry name" value="RNA_pol_Rpb1_4"/>
    <property type="match status" value="1"/>
</dbReference>
<dbReference type="Pfam" id="PF04998">
    <property type="entry name" value="RNA_pol_Rpb1_5"/>
    <property type="match status" value="1"/>
</dbReference>
<dbReference type="SMART" id="SM00663">
    <property type="entry name" value="RPOLA_N"/>
    <property type="match status" value="1"/>
</dbReference>
<dbReference type="SUPFAM" id="SSF64484">
    <property type="entry name" value="beta and beta-prime subunits of DNA dependent RNA-polymerase"/>
    <property type="match status" value="1"/>
</dbReference>
<comment type="function">
    <text evidence="1">DNA-dependent RNA polymerase catalyzes the transcription of DNA into RNA using the four ribonucleoside triphosphates as substrates.</text>
</comment>
<comment type="catalytic activity">
    <reaction evidence="1">
        <text>RNA(n) + a ribonucleoside 5'-triphosphate = RNA(n+1) + diphosphate</text>
        <dbReference type="Rhea" id="RHEA:21248"/>
        <dbReference type="Rhea" id="RHEA-COMP:14527"/>
        <dbReference type="Rhea" id="RHEA-COMP:17342"/>
        <dbReference type="ChEBI" id="CHEBI:33019"/>
        <dbReference type="ChEBI" id="CHEBI:61557"/>
        <dbReference type="ChEBI" id="CHEBI:140395"/>
        <dbReference type="EC" id="2.7.7.6"/>
    </reaction>
</comment>
<comment type="cofactor">
    <cofactor evidence="1">
        <name>Mg(2+)</name>
        <dbReference type="ChEBI" id="CHEBI:18420"/>
    </cofactor>
    <text evidence="1">Binds 1 Mg(2+) ion per subunit.</text>
</comment>
<comment type="cofactor">
    <cofactor evidence="1">
        <name>Zn(2+)</name>
        <dbReference type="ChEBI" id="CHEBI:29105"/>
    </cofactor>
    <text evidence="1">Binds 2 Zn(2+) ions per subunit.</text>
</comment>
<comment type="subunit">
    <text evidence="1">The RNAP catalytic core consists of 2 alpha, 1 beta, 1 beta' and 1 omega subunit. When a sigma factor is associated with the core the holoenzyme is formed, which can initiate transcription.</text>
</comment>
<comment type="similarity">
    <text evidence="1">Belongs to the RNA polymerase beta' chain family.</text>
</comment>
<evidence type="ECO:0000255" key="1">
    <source>
        <dbReference type="HAMAP-Rule" id="MF_01322"/>
    </source>
</evidence>
<sequence length="1215" mass="135677">MVDVNKFESMQIGLASPDKIRSWSYGEVKKPETINYRTLKPEKDGLFDERIFGPTKDWECACGKYKRIRYKGVVCDRCGVEVTRSKVRRERMGHIELAAPVTHIWYFKGIPSRMGLVLDMSPRALEEIIYFASYVVLDPGNTPLEKKQLLSERDYRDKLLEYGSDAFKAEMGAEAIKKLLMSVDLDKEVTELKEELKEATGQKRTRAVRRLDILEAFVMSGNRPEWMVMDAIPVIPPDLRPMVQLEGGRFATSDLNDLYRRVINRNSRLKRLLDLNAPGIIVQNEKRMLQEAVDALIDNGRRGRPVAGPGNRPLKSLSHMLKGKQGRFRQNLLGKRVDYSGRSVIDVGPSLKFNQMGLPVPMALELFRPFIMKELVARGLASNIKNAKRQIDREDDDVFNVLEDVIKEHPVLLNRAPTLHRLGIQAFEPVLVSGKAMRLHPLACEAYNADFDGDQMAIHVPLSDEAQAEARLLMLAAHHILAPASGKPVVAPSQDMVIGNYYLTMEEANREGEGMIFTDLDEATLAYRNGIVHWHTRVGVQVTSMPDKPFTDEQRSKIMVTTVGKLIFNNILPKSFPYLNEPTSTNLNGYVPDKYFLEPGEDIHDYLQNAEIIPPFKKGFLSDIIAAVYQQYKVTATSELLDRIKDLGYNESTKSGLTVGMVDVTDLKEKPEIIAAAHKQVSTVTKQFRRGLITDHERYERVIGIWNDAKDEIQNALIHSFDQQNPIFMMSDSGARGNISNFTQLAGMRGLMAAPSGDIMELPITSNFREGLTVMEMFISTHGARKGMTDTALKTANSGYLTRRLVDVAQDVIIREKDCGTDRGLKIRAITDGNEMIEPLYDRILGRYTQKTVYDPQTGDVIVPKNQMIVEDTAQQIVDAGVEEVTIRSAFTCNTEHGVCEHCYGRNMATGDEVEVGEAVGTVAAQSIGEPGTQLTMRNFHTGGVAGNEDITQGLPRVQELFESRNPKGKAEITEVTGTVESIEENPAERTKEITIKGEADTRSYTLPITARMRVSEGDFIHRGGALNYGSVDPKELLRVRDVLSTETYILGEVQRVYRMQGVAISDKHVEIMVRQMLRKVRIMDPGDTDVLPGTLMDIQDFRRANYQTLIDGGIAATARPVILGITKAALETNSFLSAASFQETTRVLTDAAIRGKNDPLVGLKENVIIGKIIPAGTGMPDYRQIKPKEVGGTSTEGVYSISDLEKQMQEDSQA</sequence>
<organism>
    <name type="scientific">Levilactobacillus brevis (strain ATCC 367 / BCRC 12310 / CIP 105137 / JCM 1170 / LMG 11437 / NCIMB 947 / NCTC 947)</name>
    <name type="common">Lactobacillus brevis</name>
    <dbReference type="NCBI Taxonomy" id="387344"/>
    <lineage>
        <taxon>Bacteria</taxon>
        <taxon>Bacillati</taxon>
        <taxon>Bacillota</taxon>
        <taxon>Bacilli</taxon>
        <taxon>Lactobacillales</taxon>
        <taxon>Lactobacillaceae</taxon>
        <taxon>Levilactobacillus</taxon>
    </lineage>
</organism>
<gene>
    <name evidence="1" type="primary">rpoC</name>
    <name type="ordered locus">LVIS_1697</name>
</gene>
<protein>
    <recommendedName>
        <fullName evidence="1">DNA-directed RNA polymerase subunit beta'</fullName>
        <shortName evidence="1">RNAP subunit beta'</shortName>
        <ecNumber evidence="1">2.7.7.6</ecNumber>
    </recommendedName>
    <alternativeName>
        <fullName evidence="1">RNA polymerase subunit beta'</fullName>
    </alternativeName>
    <alternativeName>
        <fullName evidence="1">Transcriptase subunit beta'</fullName>
    </alternativeName>
</protein>
<accession>Q03PV0</accession>